<accession>Q3K407</accession>
<comment type="function">
    <text evidence="1">Involved in DNA repair and RecF pathway recombination.</text>
</comment>
<comment type="similarity">
    <text evidence="1">Belongs to the RecO family.</text>
</comment>
<reference key="1">
    <citation type="journal article" date="2005" name="Proc. Natl. Acad. Sci. U.S.A.">
        <title>Genome analysis of multiple pathogenic isolates of Streptococcus agalactiae: implications for the microbial 'pan-genome'.</title>
        <authorList>
            <person name="Tettelin H."/>
            <person name="Masignani V."/>
            <person name="Cieslewicz M.J."/>
            <person name="Donati C."/>
            <person name="Medini D."/>
            <person name="Ward N.L."/>
            <person name="Angiuoli S.V."/>
            <person name="Crabtree J."/>
            <person name="Jones A.L."/>
            <person name="Durkin A.S."/>
            <person name="DeBoy R.T."/>
            <person name="Davidsen T.M."/>
            <person name="Mora M."/>
            <person name="Scarselli M."/>
            <person name="Margarit y Ros I."/>
            <person name="Peterson J.D."/>
            <person name="Hauser C.R."/>
            <person name="Sundaram J.P."/>
            <person name="Nelson W.C."/>
            <person name="Madupu R."/>
            <person name="Brinkac L.M."/>
            <person name="Dodson R.J."/>
            <person name="Rosovitz M.J."/>
            <person name="Sullivan S.A."/>
            <person name="Daugherty S.C."/>
            <person name="Haft D.H."/>
            <person name="Selengut J."/>
            <person name="Gwinn M.L."/>
            <person name="Zhou L."/>
            <person name="Zafar N."/>
            <person name="Khouri H."/>
            <person name="Radune D."/>
            <person name="Dimitrov G."/>
            <person name="Watkins K."/>
            <person name="O'Connor K.J."/>
            <person name="Smith S."/>
            <person name="Utterback T.R."/>
            <person name="White O."/>
            <person name="Rubens C.E."/>
            <person name="Grandi G."/>
            <person name="Madoff L.C."/>
            <person name="Kasper D.L."/>
            <person name="Telford J.L."/>
            <person name="Wessels M.R."/>
            <person name="Rappuoli R."/>
            <person name="Fraser C.M."/>
        </authorList>
    </citation>
    <scope>NUCLEOTIDE SEQUENCE [LARGE SCALE GENOMIC DNA]</scope>
    <source>
        <strain>ATCC 27591 / A909 / CDC SS700</strain>
    </source>
</reference>
<name>RECO_STRA1</name>
<keyword id="KW-0227">DNA damage</keyword>
<keyword id="KW-0233">DNA recombination</keyword>
<keyword id="KW-0234">DNA repair</keyword>
<sequence length="253" mass="29642">MRVSQTYGLVLYNRNYREDDKLVKIFTETEGKRMFFVKHASKSKFNAVLQPLTIAHFILKINDNGLSYIDDYKEVLAFQEINSDLFKLSYASYITSLADVAISDNVADAQLFIFLKKTLELIEDGLDYEILTNIFEVQLLERFGVALNFHDCVFCHRAGLPFDFSHKYSGLLCPNHYYKDERRNHLDPNMLHLINRFQSIQFDDLQTISVKPEMKLKIRQFLDMIYDEYVGIHLKSKKFIDDLSSWGSIMKSD</sequence>
<organism>
    <name type="scientific">Streptococcus agalactiae serotype Ia (strain ATCC 27591 / A909 / CDC SS700)</name>
    <dbReference type="NCBI Taxonomy" id="205921"/>
    <lineage>
        <taxon>Bacteria</taxon>
        <taxon>Bacillati</taxon>
        <taxon>Bacillota</taxon>
        <taxon>Bacilli</taxon>
        <taxon>Lactobacillales</taxon>
        <taxon>Streptococcaceae</taxon>
        <taxon>Streptococcus</taxon>
    </lineage>
</organism>
<evidence type="ECO:0000255" key="1">
    <source>
        <dbReference type="HAMAP-Rule" id="MF_00201"/>
    </source>
</evidence>
<feature type="chain" id="PRO_0000227057" description="DNA repair protein RecO">
    <location>
        <begin position="1"/>
        <end position="253"/>
    </location>
</feature>
<gene>
    <name evidence="1" type="primary">recO</name>
    <name type="ordered locus">SAK_0053</name>
</gene>
<protein>
    <recommendedName>
        <fullName evidence="1">DNA repair protein RecO</fullName>
    </recommendedName>
    <alternativeName>
        <fullName evidence="1">Recombination protein O</fullName>
    </alternativeName>
</protein>
<proteinExistence type="inferred from homology"/>
<dbReference type="EMBL" id="CP000114">
    <property type="protein sequence ID" value="ABA45037.1"/>
    <property type="molecule type" value="Genomic_DNA"/>
</dbReference>
<dbReference type="RefSeq" id="WP_001266268.1">
    <property type="nucleotide sequence ID" value="NC_007432.1"/>
</dbReference>
<dbReference type="SMR" id="Q3K407"/>
<dbReference type="KEGG" id="sak:SAK_0053"/>
<dbReference type="HOGENOM" id="CLU_066632_4_0_9"/>
<dbReference type="GO" id="GO:0043590">
    <property type="term" value="C:bacterial nucleoid"/>
    <property type="evidence" value="ECO:0007669"/>
    <property type="project" value="TreeGrafter"/>
</dbReference>
<dbReference type="GO" id="GO:0006310">
    <property type="term" value="P:DNA recombination"/>
    <property type="evidence" value="ECO:0007669"/>
    <property type="project" value="UniProtKB-UniRule"/>
</dbReference>
<dbReference type="GO" id="GO:0006302">
    <property type="term" value="P:double-strand break repair"/>
    <property type="evidence" value="ECO:0007669"/>
    <property type="project" value="TreeGrafter"/>
</dbReference>
<dbReference type="Gene3D" id="2.40.50.140">
    <property type="entry name" value="Nucleic acid-binding proteins"/>
    <property type="match status" value="1"/>
</dbReference>
<dbReference type="Gene3D" id="1.20.1440.120">
    <property type="entry name" value="Recombination protein O, C-terminal domain"/>
    <property type="match status" value="1"/>
</dbReference>
<dbReference type="HAMAP" id="MF_00201">
    <property type="entry name" value="RecO"/>
    <property type="match status" value="1"/>
</dbReference>
<dbReference type="InterPro" id="IPR037278">
    <property type="entry name" value="ARFGAP/RecO"/>
</dbReference>
<dbReference type="InterPro" id="IPR022572">
    <property type="entry name" value="DNA_rep/recomb_RecO_N"/>
</dbReference>
<dbReference type="InterPro" id="IPR012340">
    <property type="entry name" value="NA-bd_OB-fold"/>
</dbReference>
<dbReference type="InterPro" id="IPR003717">
    <property type="entry name" value="RecO"/>
</dbReference>
<dbReference type="InterPro" id="IPR042242">
    <property type="entry name" value="RecO_C"/>
</dbReference>
<dbReference type="NCBIfam" id="TIGR00613">
    <property type="entry name" value="reco"/>
    <property type="match status" value="1"/>
</dbReference>
<dbReference type="PANTHER" id="PTHR33991">
    <property type="entry name" value="DNA REPAIR PROTEIN RECO"/>
    <property type="match status" value="1"/>
</dbReference>
<dbReference type="PANTHER" id="PTHR33991:SF1">
    <property type="entry name" value="DNA REPAIR PROTEIN RECO"/>
    <property type="match status" value="1"/>
</dbReference>
<dbReference type="Pfam" id="PF02565">
    <property type="entry name" value="RecO_C"/>
    <property type="match status" value="1"/>
</dbReference>
<dbReference type="Pfam" id="PF11967">
    <property type="entry name" value="RecO_N"/>
    <property type="match status" value="1"/>
</dbReference>
<dbReference type="SUPFAM" id="SSF57863">
    <property type="entry name" value="ArfGap/RecO-like zinc finger"/>
    <property type="match status" value="1"/>
</dbReference>
<dbReference type="SUPFAM" id="SSF50249">
    <property type="entry name" value="Nucleic acid-binding proteins"/>
    <property type="match status" value="1"/>
</dbReference>